<protein>
    <recommendedName>
        <fullName>Septin and tuftelin-interacting protein 1 homolog</fullName>
        <shortName>STIP-1</shortName>
    </recommendedName>
</protein>
<feature type="chain" id="PRO_0000342283" description="Septin and tuftelin-interacting protein 1 homolog">
    <location>
        <begin position="1"/>
        <end position="830"/>
    </location>
</feature>
<feature type="domain" description="G-patch" evidence="2">
    <location>
        <begin position="153"/>
        <end position="199"/>
    </location>
</feature>
<feature type="region of interest" description="Disordered" evidence="3">
    <location>
        <begin position="1"/>
        <end position="122"/>
    </location>
</feature>
<feature type="region of interest" description="Disordered" evidence="3">
    <location>
        <begin position="196"/>
        <end position="244"/>
    </location>
</feature>
<feature type="compositionally biased region" description="Acidic residues" evidence="3">
    <location>
        <begin position="1"/>
        <end position="17"/>
    </location>
</feature>
<gene>
    <name type="primary">stip-1</name>
    <name type="synonym">stip</name>
    <name type="ORF">C07E3.1</name>
</gene>
<accession>Q17784</accession>
<accession>A1XDB6</accession>
<dbReference type="EMBL" id="DQ342049">
    <property type="protein sequence ID" value="ABC69941.1"/>
    <property type="molecule type" value="mRNA"/>
</dbReference>
<dbReference type="EMBL" id="Z49908">
    <property type="protein sequence ID" value="CAA90093.2"/>
    <property type="molecule type" value="Genomic_DNA"/>
</dbReference>
<dbReference type="RefSeq" id="NP_496226.2">
    <property type="nucleotide sequence ID" value="NM_063825.7"/>
</dbReference>
<dbReference type="PDB" id="8RO0">
    <property type="method" value="EM"/>
    <property type="resolution" value="2.90 A"/>
    <property type="chains" value="TF=1-830"/>
</dbReference>
<dbReference type="PDB" id="8RO1">
    <property type="method" value="EM"/>
    <property type="resolution" value="3.00 A"/>
    <property type="chains" value="TF=1-830"/>
</dbReference>
<dbReference type="PDBsum" id="8RO0"/>
<dbReference type="PDBsum" id="8RO1"/>
<dbReference type="EMDB" id="EMD-19397"/>
<dbReference type="EMDB" id="EMD-19398"/>
<dbReference type="SMR" id="Q17784"/>
<dbReference type="BioGRID" id="39919">
    <property type="interactions" value="3"/>
</dbReference>
<dbReference type="DIP" id="DIP-25481N"/>
<dbReference type="FunCoup" id="Q17784">
    <property type="interactions" value="2843"/>
</dbReference>
<dbReference type="IntAct" id="Q17784">
    <property type="interactions" value="2"/>
</dbReference>
<dbReference type="STRING" id="6239.C07E3.1a.2"/>
<dbReference type="PaxDb" id="6239-C07E3.1a"/>
<dbReference type="PeptideAtlas" id="Q17784"/>
<dbReference type="EnsemblMetazoa" id="C07E3.1a.1">
    <property type="protein sequence ID" value="C07E3.1a.1"/>
    <property type="gene ID" value="WBGene00007412"/>
</dbReference>
<dbReference type="GeneID" id="174600"/>
<dbReference type="KEGG" id="cel:CELE_C07E3.1"/>
<dbReference type="UCSC" id="C07E3.1a">
    <property type="organism name" value="c. elegans"/>
</dbReference>
<dbReference type="AGR" id="WB:WBGene00007412"/>
<dbReference type="CTD" id="174600"/>
<dbReference type="WormBase" id="C07E3.1a">
    <property type="protein sequence ID" value="CE41502"/>
    <property type="gene ID" value="WBGene00007412"/>
    <property type="gene designation" value="stip-1"/>
</dbReference>
<dbReference type="eggNOG" id="KOG2184">
    <property type="taxonomic scope" value="Eukaryota"/>
</dbReference>
<dbReference type="HOGENOM" id="CLU_007977_1_1_1"/>
<dbReference type="InParanoid" id="Q17784"/>
<dbReference type="OMA" id="CEQDIIQ"/>
<dbReference type="OrthoDB" id="4822at2759"/>
<dbReference type="PhylomeDB" id="Q17784"/>
<dbReference type="PRO" id="PR:Q17784"/>
<dbReference type="Proteomes" id="UP000001940">
    <property type="component" value="Chromosome II"/>
</dbReference>
<dbReference type="Bgee" id="WBGene00007412">
    <property type="expression patterns" value="Expressed in embryo and 4 other cell types or tissues"/>
</dbReference>
<dbReference type="ExpressionAtlas" id="Q17784">
    <property type="expression patterns" value="baseline and differential"/>
</dbReference>
<dbReference type="GO" id="GO:0005681">
    <property type="term" value="C:spliceosomal complex"/>
    <property type="evidence" value="ECO:0000250"/>
    <property type="project" value="UniProtKB"/>
</dbReference>
<dbReference type="GO" id="GO:0071008">
    <property type="term" value="C:U2-type post-mRNA release spliceosomal complex"/>
    <property type="evidence" value="ECO:0000318"/>
    <property type="project" value="GO_Central"/>
</dbReference>
<dbReference type="GO" id="GO:0003676">
    <property type="term" value="F:nucleic acid binding"/>
    <property type="evidence" value="ECO:0007669"/>
    <property type="project" value="InterPro"/>
</dbReference>
<dbReference type="GO" id="GO:0000390">
    <property type="term" value="P:spliceosomal complex disassembly"/>
    <property type="evidence" value="ECO:0000318"/>
    <property type="project" value="GO_Central"/>
</dbReference>
<dbReference type="InterPro" id="IPR000467">
    <property type="entry name" value="G_patch_dom"/>
</dbReference>
<dbReference type="InterPro" id="IPR022783">
    <property type="entry name" value="GCFC_dom"/>
</dbReference>
<dbReference type="InterPro" id="IPR022159">
    <property type="entry name" value="STIP/TFIP11_N"/>
</dbReference>
<dbReference type="InterPro" id="IPR024933">
    <property type="entry name" value="TFP11"/>
</dbReference>
<dbReference type="InterPro" id="IPR045211">
    <property type="entry name" value="TFP11/STIP/Ntr1"/>
</dbReference>
<dbReference type="PANTHER" id="PTHR23329:SF1">
    <property type="entry name" value="TUFTELIN-INTERACTING PROTEIN 11"/>
    <property type="match status" value="1"/>
</dbReference>
<dbReference type="PANTHER" id="PTHR23329">
    <property type="entry name" value="TUFTELIN-INTERACTING PROTEIN 11-RELATED"/>
    <property type="match status" value="1"/>
</dbReference>
<dbReference type="Pfam" id="PF01585">
    <property type="entry name" value="G-patch"/>
    <property type="match status" value="1"/>
</dbReference>
<dbReference type="Pfam" id="PF07842">
    <property type="entry name" value="GCFC"/>
    <property type="match status" value="1"/>
</dbReference>
<dbReference type="Pfam" id="PF12457">
    <property type="entry name" value="TIP_N"/>
    <property type="match status" value="1"/>
</dbReference>
<dbReference type="PIRSF" id="PIRSF017706">
    <property type="entry name" value="TFIP11"/>
    <property type="match status" value="1"/>
</dbReference>
<dbReference type="SMART" id="SM00443">
    <property type="entry name" value="G_patch"/>
    <property type="match status" value="1"/>
</dbReference>
<dbReference type="PROSITE" id="PS50174">
    <property type="entry name" value="G_PATCH"/>
    <property type="match status" value="1"/>
</dbReference>
<reference key="1">
    <citation type="journal article" date="2007" name="Exp. Cell Res.">
        <title>Characterization of STIP, a multi-domain nuclear protein, highly conserved in metazoans, and essential for embryogenesis in Caenorhabditis elegans.</title>
        <authorList>
            <person name="Ji Q."/>
            <person name="Huang C.-H."/>
            <person name="Peng J."/>
            <person name="Hashmi S."/>
            <person name="Ye T."/>
            <person name="Chen Y."/>
        </authorList>
    </citation>
    <scope>NUCLEOTIDE SEQUENCE [MRNA]</scope>
    <scope>FUNCTION</scope>
    <scope>SUBCELLULAR LOCATION</scope>
    <scope>SUBUNIT</scope>
    <scope>DEVELOPMENTAL STAGE</scope>
    <scope>TISSUE SPECIFICITY</scope>
    <source>
        <strain>Bristol N2</strain>
        <tissue>Embryo</tissue>
    </source>
</reference>
<reference key="2">
    <citation type="journal article" date="1998" name="Science">
        <title>Genome sequence of the nematode C. elegans: a platform for investigating biology.</title>
        <authorList>
            <consortium name="The C. elegans sequencing consortium"/>
        </authorList>
    </citation>
    <scope>NUCLEOTIDE SEQUENCE [LARGE SCALE GENOMIC DNA]</scope>
    <source>
        <strain>Bristol N2</strain>
    </source>
</reference>
<sequence length="830" mass="94313">MEDDDGRESFEINDMDLEYAMNPGGRRRFQNKDQATYGVFAPDSDDDDDEQGTSRGPYKKRSKISAPMSFVSGGIQQGNKIDKDDPASLNLNLGGEKKPKEDDEGSIQIDFDKRTKKAPKQNGAQVFAGMRSSANHGAADINQFGSWMRGDGNSNKIMKMMQAMGYKPGEGLGAQGQGIVEPVQAQLRKGRGAVGAYGKESTATGPKFGESAADAQKRMAQEGTSSRPTNDDQEKSGLKIKGSWKKSQTVKTKYRTIEDVMEEGMSASRPASHQQSQQYSNIKVIDMTGKQQKIYSGYDSFSMKTRSEYDTVDDEERTVFDVPELIHNLNLLVDLTEEGIRRSNQQLISLKDQTTALEYDLQQVQKSLGTEEQEAQHIKDVYELIDGFSSNRSPSMEECQELFRRLRSEFPHEYELYSLETVAIPTVLPLIQKYFVAWKPLEDKNYGCELISTWRDILDDSKNGRKMTFGHNKTKGDEIRAYDRIIWEGILPSIRRACLQWDPSTQMHEMIELVEQWIPLLSAWITENILEQLVVPKIAERVNQWDPMTDEIPIHEWLVPWLVLLGDRIQTVMPPIRQKLSKALKLWDPMDRSALETLRPWQNVWSAATFSAFIAQNIVPKLGVALDTMELNPTMNPEYPEWTACMEWLEFTHPDAIANIVTKYFFPRFYNCLCLWLDSPGVDYNEVKRWYGSWKARIPQVLVNYPTVNENLRRSMIAIGRSLQGEKVGGLQATPIAPMAPPPPMAPHFTQAAPVQKLSLKEIIEYTAGKNGFTYHPQKDRYKDGRQVFWFGALSIYLDSEMVYVMDPIEFVWRPSGLNELIQMAQGAQG</sequence>
<name>TFP11_CAEEL</name>
<evidence type="ECO:0000250" key="1"/>
<evidence type="ECO:0000255" key="2">
    <source>
        <dbReference type="PROSITE-ProRule" id="PRU00092"/>
    </source>
</evidence>
<evidence type="ECO:0000256" key="3">
    <source>
        <dbReference type="SAM" id="MobiDB-lite"/>
    </source>
</evidence>
<evidence type="ECO:0000269" key="4">
    <source>
    </source>
</evidence>
<evidence type="ECO:0000305" key="5"/>
<keyword id="KW-0002">3D-structure</keyword>
<keyword id="KW-0507">mRNA processing</keyword>
<keyword id="KW-0508">mRNA splicing</keyword>
<keyword id="KW-0539">Nucleus</keyword>
<keyword id="KW-1185">Reference proteome</keyword>
<keyword id="KW-0747">Spliceosome</keyword>
<comment type="function">
    <text evidence="1 4">May be involved in pre-mRNA splicing (By similarity). Required for embryonic development and survival.</text>
</comment>
<comment type="subunit">
    <text evidence="1 4">Identified in the spliceosome C complex (By similarity). Can assemble into large rod-like polymers.</text>
</comment>
<comment type="subcellular location">
    <subcellularLocation>
        <location evidence="4">Nucleus</location>
    </subcellularLocation>
</comment>
<comment type="tissue specificity">
    <text evidence="4">Detected in muscle cells from body, pharynx and vulva, in neurons from head and tail, in pharyngeal gland and in tail hypodermal cells.</text>
</comment>
<comment type="developmental stage">
    <text evidence="4">Detected in oocyte, embryo, larval stage 1 to 4, and in adult.</text>
</comment>
<comment type="similarity">
    <text evidence="5">Belongs to the TFP11/STIP family.</text>
</comment>
<proteinExistence type="evidence at protein level"/>
<organism>
    <name type="scientific">Caenorhabditis elegans</name>
    <dbReference type="NCBI Taxonomy" id="6239"/>
    <lineage>
        <taxon>Eukaryota</taxon>
        <taxon>Metazoa</taxon>
        <taxon>Ecdysozoa</taxon>
        <taxon>Nematoda</taxon>
        <taxon>Chromadorea</taxon>
        <taxon>Rhabditida</taxon>
        <taxon>Rhabditina</taxon>
        <taxon>Rhabditomorpha</taxon>
        <taxon>Rhabditoidea</taxon>
        <taxon>Rhabditidae</taxon>
        <taxon>Peloderinae</taxon>
        <taxon>Caenorhabditis</taxon>
    </lineage>
</organism>